<sequence length="142" mass="15890">MESMGNNSPGPEIRALARNIRMSAHKARRVINQIRGRSYGQALMILELMPYGACYPISQLIHSAAANANHNMGLNKANLLVGRVEVNEGAVLKRIQPRAQGRGYPIQKPTCHITIVSEEISRSNDPIMSIESRKKGYVWRRK</sequence>
<reference key="1">
    <citation type="submission" date="2003-02" db="EMBL/GenBank/DDBJ databases">
        <title>Complete nucleotide sequence of Pinus koraiensis.</title>
        <authorList>
            <person name="Noh E.W."/>
            <person name="Lee J.S."/>
            <person name="Choi Y.I."/>
            <person name="Han M.S."/>
            <person name="Yi Y.S."/>
            <person name="Han S.U."/>
        </authorList>
    </citation>
    <scope>NUCLEOTIDE SEQUENCE [LARGE SCALE GENOMIC DNA]</scope>
    <source>
        <strain>KangWon16</strain>
    </source>
</reference>
<protein>
    <recommendedName>
        <fullName evidence="2">Large ribosomal subunit protein uL22c</fullName>
    </recommendedName>
    <alternativeName>
        <fullName>50S ribosomal protein L22, chloroplastic</fullName>
    </alternativeName>
</protein>
<dbReference type="EMBL" id="AY228468">
    <property type="protein sequence ID" value="AAO74080.1"/>
    <property type="molecule type" value="Genomic_DNA"/>
</dbReference>
<dbReference type="RefSeq" id="NP_817233.1">
    <property type="nucleotide sequence ID" value="NC_004677.2"/>
</dbReference>
<dbReference type="SMR" id="Q85WY9"/>
<dbReference type="GeneID" id="806970"/>
<dbReference type="GO" id="GO:0009507">
    <property type="term" value="C:chloroplast"/>
    <property type="evidence" value="ECO:0007669"/>
    <property type="project" value="UniProtKB-SubCell"/>
</dbReference>
<dbReference type="GO" id="GO:0015934">
    <property type="term" value="C:large ribosomal subunit"/>
    <property type="evidence" value="ECO:0007669"/>
    <property type="project" value="InterPro"/>
</dbReference>
<dbReference type="GO" id="GO:0019843">
    <property type="term" value="F:rRNA binding"/>
    <property type="evidence" value="ECO:0007669"/>
    <property type="project" value="UniProtKB-UniRule"/>
</dbReference>
<dbReference type="GO" id="GO:0003735">
    <property type="term" value="F:structural constituent of ribosome"/>
    <property type="evidence" value="ECO:0007669"/>
    <property type="project" value="InterPro"/>
</dbReference>
<dbReference type="GO" id="GO:0006412">
    <property type="term" value="P:translation"/>
    <property type="evidence" value="ECO:0007669"/>
    <property type="project" value="UniProtKB-UniRule"/>
</dbReference>
<dbReference type="CDD" id="cd00336">
    <property type="entry name" value="Ribosomal_L22"/>
    <property type="match status" value="1"/>
</dbReference>
<dbReference type="Gene3D" id="3.90.470.10">
    <property type="entry name" value="Ribosomal protein L22/L17"/>
    <property type="match status" value="1"/>
</dbReference>
<dbReference type="HAMAP" id="MF_01331_B">
    <property type="entry name" value="Ribosomal_uL22_B"/>
    <property type="match status" value="1"/>
</dbReference>
<dbReference type="InterPro" id="IPR001063">
    <property type="entry name" value="Ribosomal_uL22"/>
</dbReference>
<dbReference type="InterPro" id="IPR005727">
    <property type="entry name" value="Ribosomal_uL22_bac/chlpt-type"/>
</dbReference>
<dbReference type="InterPro" id="IPR047867">
    <property type="entry name" value="Ribosomal_uL22_bac/org-type"/>
</dbReference>
<dbReference type="InterPro" id="IPR036394">
    <property type="entry name" value="Ribosomal_uL22_sf"/>
</dbReference>
<dbReference type="NCBIfam" id="TIGR01044">
    <property type="entry name" value="rplV_bact"/>
    <property type="match status" value="1"/>
</dbReference>
<dbReference type="PANTHER" id="PTHR13501">
    <property type="entry name" value="CHLOROPLAST 50S RIBOSOMAL PROTEIN L22-RELATED"/>
    <property type="match status" value="1"/>
</dbReference>
<dbReference type="PANTHER" id="PTHR13501:SF10">
    <property type="entry name" value="LARGE RIBOSOMAL SUBUNIT PROTEIN UL22M"/>
    <property type="match status" value="1"/>
</dbReference>
<dbReference type="Pfam" id="PF00237">
    <property type="entry name" value="Ribosomal_L22"/>
    <property type="match status" value="1"/>
</dbReference>
<dbReference type="SUPFAM" id="SSF54843">
    <property type="entry name" value="Ribosomal protein L22"/>
    <property type="match status" value="1"/>
</dbReference>
<comment type="function">
    <text evidence="1">This protein binds specifically to 23S rRNA.</text>
</comment>
<comment type="function">
    <text evidence="1">The globular domain of the protein is located near the polypeptide exit tunnel on the outside of the subunit, while an extended beta-hairpin is found that lines the wall of the exit tunnel in the center of the 70S ribosome.</text>
</comment>
<comment type="subunit">
    <text evidence="1">Part of the 50S ribosomal subunit.</text>
</comment>
<comment type="subcellular location">
    <subcellularLocation>
        <location>Plastid</location>
        <location>Chloroplast</location>
    </subcellularLocation>
</comment>
<comment type="similarity">
    <text evidence="2">Belongs to the universal ribosomal protein uL22 family.</text>
</comment>
<feature type="chain" id="PRO_0000125321" description="Large ribosomal subunit protein uL22c">
    <location>
        <begin position="1"/>
        <end position="142"/>
    </location>
</feature>
<keyword id="KW-0150">Chloroplast</keyword>
<keyword id="KW-0934">Plastid</keyword>
<keyword id="KW-0687">Ribonucleoprotein</keyword>
<keyword id="KW-0689">Ribosomal protein</keyword>
<keyword id="KW-0694">RNA-binding</keyword>
<keyword id="KW-0699">rRNA-binding</keyword>
<accession>Q85WY9</accession>
<name>RK22_PINKO</name>
<gene>
    <name type="primary">rpl22</name>
</gene>
<proteinExistence type="inferred from homology"/>
<evidence type="ECO:0000250" key="1"/>
<evidence type="ECO:0000305" key="2"/>
<organism>
    <name type="scientific">Pinus koraiensis</name>
    <name type="common">Korean pine</name>
    <dbReference type="NCBI Taxonomy" id="88728"/>
    <lineage>
        <taxon>Eukaryota</taxon>
        <taxon>Viridiplantae</taxon>
        <taxon>Streptophyta</taxon>
        <taxon>Embryophyta</taxon>
        <taxon>Tracheophyta</taxon>
        <taxon>Spermatophyta</taxon>
        <taxon>Pinopsida</taxon>
        <taxon>Pinidae</taxon>
        <taxon>Conifers I</taxon>
        <taxon>Pinales</taxon>
        <taxon>Pinaceae</taxon>
        <taxon>Pinus</taxon>
        <taxon>Pinus subgen. Strobus</taxon>
    </lineage>
</organism>
<geneLocation type="chloroplast"/>